<gene>
    <name evidence="1" type="primary">trpA</name>
    <name type="ordered locus">Bfl431</name>
</gene>
<protein>
    <recommendedName>
        <fullName evidence="1">Tryptophan synthase alpha chain</fullName>
        <ecNumber evidence="1">4.2.1.20</ecNumber>
    </recommendedName>
</protein>
<feature type="chain" id="PRO_0000098764" description="Tryptophan synthase alpha chain">
    <location>
        <begin position="1"/>
        <end position="271"/>
    </location>
</feature>
<feature type="active site" description="Proton acceptor" evidence="1">
    <location>
        <position position="49"/>
    </location>
</feature>
<feature type="active site" description="Proton acceptor" evidence="1">
    <location>
        <position position="60"/>
    </location>
</feature>
<reference key="1">
    <citation type="journal article" date="2003" name="Proc. Natl. Acad. Sci. U.S.A.">
        <title>The genome sequence of Blochmannia floridanus: comparative analysis of reduced genomes.</title>
        <authorList>
            <person name="Gil R."/>
            <person name="Silva F.J."/>
            <person name="Zientz E."/>
            <person name="Delmotte F."/>
            <person name="Gonzalez-Candelas F."/>
            <person name="Latorre A."/>
            <person name="Rausell C."/>
            <person name="Kamerbeek J."/>
            <person name="Gadau J."/>
            <person name="Hoelldobler B."/>
            <person name="van Ham R.C.H.J."/>
            <person name="Gross R."/>
            <person name="Moya A."/>
        </authorList>
    </citation>
    <scope>NUCLEOTIDE SEQUENCE [LARGE SCALE GENOMIC DNA]</scope>
</reference>
<sequence length="271" mass="30177">MNRYQTMFKSLNQNKLGAFVPFITIGDPDPTTFIHIIDTLIQSGADALELGIPFSDPVSDGPSIQKSMERSFKSGANISSCLQLIKKIRNKYPTLPIGLLIYANLIFKNGIKNFYAHCSTLSIDSILIPDLPIEESSLFYNSAMYYQIAHIFICPTNASLDLIKKITDKGIGYIYLLSRSGITGINNTEFNKIKLNTLIYNIKQCNQKLPILQGFGIYSSEQARSSLLSGTSGIISGSCIANIIEENHPNIDLLLEKIRKFTHLMKIAMKL</sequence>
<keyword id="KW-0028">Amino-acid biosynthesis</keyword>
<keyword id="KW-0057">Aromatic amino acid biosynthesis</keyword>
<keyword id="KW-0456">Lyase</keyword>
<keyword id="KW-1185">Reference proteome</keyword>
<keyword id="KW-0822">Tryptophan biosynthesis</keyword>
<proteinExistence type="inferred from homology"/>
<evidence type="ECO:0000255" key="1">
    <source>
        <dbReference type="HAMAP-Rule" id="MF_00131"/>
    </source>
</evidence>
<name>TRPA_BLOFL</name>
<comment type="function">
    <text evidence="1">The alpha subunit is responsible for the aldol cleavage of indoleglycerol phosphate to indole and glyceraldehyde 3-phosphate.</text>
</comment>
<comment type="catalytic activity">
    <reaction evidence="1">
        <text>(1S,2R)-1-C-(indol-3-yl)glycerol 3-phosphate + L-serine = D-glyceraldehyde 3-phosphate + L-tryptophan + H2O</text>
        <dbReference type="Rhea" id="RHEA:10532"/>
        <dbReference type="ChEBI" id="CHEBI:15377"/>
        <dbReference type="ChEBI" id="CHEBI:33384"/>
        <dbReference type="ChEBI" id="CHEBI:57912"/>
        <dbReference type="ChEBI" id="CHEBI:58866"/>
        <dbReference type="ChEBI" id="CHEBI:59776"/>
        <dbReference type="EC" id="4.2.1.20"/>
    </reaction>
</comment>
<comment type="pathway">
    <text evidence="1">Amino-acid biosynthesis; L-tryptophan biosynthesis; L-tryptophan from chorismate: step 5/5.</text>
</comment>
<comment type="subunit">
    <text evidence="1">Tetramer of two alpha and two beta chains.</text>
</comment>
<comment type="similarity">
    <text evidence="1">Belongs to the TrpA family.</text>
</comment>
<dbReference type="EC" id="4.2.1.20" evidence="1"/>
<dbReference type="EMBL" id="BX248583">
    <property type="protein sequence ID" value="CAD83493.1"/>
    <property type="molecule type" value="Genomic_DNA"/>
</dbReference>
<dbReference type="SMR" id="Q7VQZ9"/>
<dbReference type="STRING" id="203907.Bfl431"/>
<dbReference type="KEGG" id="bfl:Bfl431"/>
<dbReference type="eggNOG" id="COG0159">
    <property type="taxonomic scope" value="Bacteria"/>
</dbReference>
<dbReference type="HOGENOM" id="CLU_016734_0_4_6"/>
<dbReference type="OrthoDB" id="9804578at2"/>
<dbReference type="UniPathway" id="UPA00035">
    <property type="reaction ID" value="UER00044"/>
</dbReference>
<dbReference type="Proteomes" id="UP000002192">
    <property type="component" value="Chromosome"/>
</dbReference>
<dbReference type="GO" id="GO:0005829">
    <property type="term" value="C:cytosol"/>
    <property type="evidence" value="ECO:0007669"/>
    <property type="project" value="TreeGrafter"/>
</dbReference>
<dbReference type="GO" id="GO:0004834">
    <property type="term" value="F:tryptophan synthase activity"/>
    <property type="evidence" value="ECO:0007669"/>
    <property type="project" value="UniProtKB-UniRule"/>
</dbReference>
<dbReference type="CDD" id="cd04724">
    <property type="entry name" value="Tryptophan_synthase_alpha"/>
    <property type="match status" value="1"/>
</dbReference>
<dbReference type="FunFam" id="3.20.20.70:FF:000037">
    <property type="entry name" value="Tryptophan synthase alpha chain"/>
    <property type="match status" value="1"/>
</dbReference>
<dbReference type="Gene3D" id="3.20.20.70">
    <property type="entry name" value="Aldolase class I"/>
    <property type="match status" value="1"/>
</dbReference>
<dbReference type="HAMAP" id="MF_00131">
    <property type="entry name" value="Trp_synth_alpha"/>
    <property type="match status" value="1"/>
</dbReference>
<dbReference type="InterPro" id="IPR013785">
    <property type="entry name" value="Aldolase_TIM"/>
</dbReference>
<dbReference type="InterPro" id="IPR011060">
    <property type="entry name" value="RibuloseP-bd_barrel"/>
</dbReference>
<dbReference type="InterPro" id="IPR018204">
    <property type="entry name" value="Trp_synthase_alpha_AS"/>
</dbReference>
<dbReference type="InterPro" id="IPR002028">
    <property type="entry name" value="Trp_synthase_suA"/>
</dbReference>
<dbReference type="NCBIfam" id="TIGR00262">
    <property type="entry name" value="trpA"/>
    <property type="match status" value="1"/>
</dbReference>
<dbReference type="PANTHER" id="PTHR43406:SF1">
    <property type="entry name" value="TRYPTOPHAN SYNTHASE ALPHA CHAIN, CHLOROPLASTIC"/>
    <property type="match status" value="1"/>
</dbReference>
<dbReference type="PANTHER" id="PTHR43406">
    <property type="entry name" value="TRYPTOPHAN SYNTHASE, ALPHA CHAIN"/>
    <property type="match status" value="1"/>
</dbReference>
<dbReference type="Pfam" id="PF00290">
    <property type="entry name" value="Trp_syntA"/>
    <property type="match status" value="1"/>
</dbReference>
<dbReference type="SUPFAM" id="SSF51366">
    <property type="entry name" value="Ribulose-phoshate binding barrel"/>
    <property type="match status" value="1"/>
</dbReference>
<dbReference type="PROSITE" id="PS00167">
    <property type="entry name" value="TRP_SYNTHASE_ALPHA"/>
    <property type="match status" value="1"/>
</dbReference>
<accession>Q7VQZ9</accession>
<organism>
    <name type="scientific">Blochmanniella floridana</name>
    <dbReference type="NCBI Taxonomy" id="203907"/>
    <lineage>
        <taxon>Bacteria</taxon>
        <taxon>Pseudomonadati</taxon>
        <taxon>Pseudomonadota</taxon>
        <taxon>Gammaproteobacteria</taxon>
        <taxon>Enterobacterales</taxon>
        <taxon>Enterobacteriaceae</taxon>
        <taxon>ant endosymbionts</taxon>
        <taxon>Candidatus Blochmanniella</taxon>
    </lineage>
</organism>